<gene>
    <name evidence="1" type="primary">pyrB</name>
    <name type="ordered locus">VC_2510</name>
</gene>
<organism>
    <name type="scientific">Vibrio cholerae serotype O1 (strain ATCC 39315 / El Tor Inaba N16961)</name>
    <dbReference type="NCBI Taxonomy" id="243277"/>
    <lineage>
        <taxon>Bacteria</taxon>
        <taxon>Pseudomonadati</taxon>
        <taxon>Pseudomonadota</taxon>
        <taxon>Gammaproteobacteria</taxon>
        <taxon>Vibrionales</taxon>
        <taxon>Vibrionaceae</taxon>
        <taxon>Vibrio</taxon>
    </lineage>
</organism>
<proteinExistence type="inferred from homology"/>
<reference key="1">
    <citation type="journal article" date="2000" name="Nature">
        <title>DNA sequence of both chromosomes of the cholera pathogen Vibrio cholerae.</title>
        <authorList>
            <person name="Heidelberg J.F."/>
            <person name="Eisen J.A."/>
            <person name="Nelson W.C."/>
            <person name="Clayton R.A."/>
            <person name="Gwinn M.L."/>
            <person name="Dodson R.J."/>
            <person name="Haft D.H."/>
            <person name="Hickey E.K."/>
            <person name="Peterson J.D."/>
            <person name="Umayam L.A."/>
            <person name="Gill S.R."/>
            <person name="Nelson K.E."/>
            <person name="Read T.D."/>
            <person name="Tettelin H."/>
            <person name="Richardson D.L."/>
            <person name="Ermolaeva M.D."/>
            <person name="Vamathevan J.J."/>
            <person name="Bass S."/>
            <person name="Qin H."/>
            <person name="Dragoi I."/>
            <person name="Sellers P."/>
            <person name="McDonald L.A."/>
            <person name="Utterback T.R."/>
            <person name="Fleischmann R.D."/>
            <person name="Nierman W.C."/>
            <person name="White O."/>
            <person name="Salzberg S.L."/>
            <person name="Smith H.O."/>
            <person name="Colwell R.R."/>
            <person name="Mekalanos J.J."/>
            <person name="Venter J.C."/>
            <person name="Fraser C.M."/>
        </authorList>
    </citation>
    <scope>NUCLEOTIDE SEQUENCE [LARGE SCALE GENOMIC DNA]</scope>
    <source>
        <strain>ATCC 39315 / El Tor Inaba N16961</strain>
    </source>
</reference>
<accession>Q9KP66</accession>
<keyword id="KW-0665">Pyrimidine biosynthesis</keyword>
<keyword id="KW-1185">Reference proteome</keyword>
<keyword id="KW-0808">Transferase</keyword>
<feature type="chain" id="PRO_0000113223" description="Aspartate carbamoyltransferase catalytic subunit">
    <location>
        <begin position="1"/>
        <end position="309"/>
    </location>
</feature>
<feature type="binding site" evidence="1">
    <location>
        <position position="55"/>
    </location>
    <ligand>
        <name>carbamoyl phosphate</name>
        <dbReference type="ChEBI" id="CHEBI:58228"/>
    </ligand>
</feature>
<feature type="binding site" evidence="1">
    <location>
        <position position="56"/>
    </location>
    <ligand>
        <name>carbamoyl phosphate</name>
        <dbReference type="ChEBI" id="CHEBI:58228"/>
    </ligand>
</feature>
<feature type="binding site" evidence="1">
    <location>
        <position position="85"/>
    </location>
    <ligand>
        <name>L-aspartate</name>
        <dbReference type="ChEBI" id="CHEBI:29991"/>
    </ligand>
</feature>
<feature type="binding site" evidence="1">
    <location>
        <position position="106"/>
    </location>
    <ligand>
        <name>carbamoyl phosphate</name>
        <dbReference type="ChEBI" id="CHEBI:58228"/>
    </ligand>
</feature>
<feature type="binding site" evidence="1">
    <location>
        <position position="135"/>
    </location>
    <ligand>
        <name>carbamoyl phosphate</name>
        <dbReference type="ChEBI" id="CHEBI:58228"/>
    </ligand>
</feature>
<feature type="binding site" evidence="1">
    <location>
        <position position="138"/>
    </location>
    <ligand>
        <name>carbamoyl phosphate</name>
        <dbReference type="ChEBI" id="CHEBI:58228"/>
    </ligand>
</feature>
<feature type="binding site" evidence="1">
    <location>
        <position position="168"/>
    </location>
    <ligand>
        <name>L-aspartate</name>
        <dbReference type="ChEBI" id="CHEBI:29991"/>
    </ligand>
</feature>
<feature type="binding site" evidence="1">
    <location>
        <position position="230"/>
    </location>
    <ligand>
        <name>L-aspartate</name>
        <dbReference type="ChEBI" id="CHEBI:29991"/>
    </ligand>
</feature>
<feature type="binding site" evidence="1">
    <location>
        <position position="268"/>
    </location>
    <ligand>
        <name>carbamoyl phosphate</name>
        <dbReference type="ChEBI" id="CHEBI:58228"/>
    </ligand>
</feature>
<feature type="binding site" evidence="1">
    <location>
        <position position="269"/>
    </location>
    <ligand>
        <name>carbamoyl phosphate</name>
        <dbReference type="ChEBI" id="CHEBI:58228"/>
    </ligand>
</feature>
<comment type="function">
    <text evidence="1">Catalyzes the condensation of carbamoyl phosphate and aspartate to form carbamoyl aspartate and inorganic phosphate, the committed step in the de novo pyrimidine nucleotide biosynthesis pathway.</text>
</comment>
<comment type="catalytic activity">
    <reaction evidence="1">
        <text>carbamoyl phosphate + L-aspartate = N-carbamoyl-L-aspartate + phosphate + H(+)</text>
        <dbReference type="Rhea" id="RHEA:20013"/>
        <dbReference type="ChEBI" id="CHEBI:15378"/>
        <dbReference type="ChEBI" id="CHEBI:29991"/>
        <dbReference type="ChEBI" id="CHEBI:32814"/>
        <dbReference type="ChEBI" id="CHEBI:43474"/>
        <dbReference type="ChEBI" id="CHEBI:58228"/>
        <dbReference type="EC" id="2.1.3.2"/>
    </reaction>
</comment>
<comment type="pathway">
    <text evidence="1">Pyrimidine metabolism; UMP biosynthesis via de novo pathway; (S)-dihydroorotate from bicarbonate: step 2/3.</text>
</comment>
<comment type="subunit">
    <text evidence="1">Heterododecamer (2C3:3R2) of six catalytic PyrB chains organized as two trimers (C3), and six regulatory PyrI chains organized as three dimers (R2).</text>
</comment>
<comment type="similarity">
    <text evidence="1">Belongs to the aspartate/ornithine carbamoyltransferase superfamily. ATCase family.</text>
</comment>
<comment type="sequence caution" evidence="2">
    <conflict type="erroneous initiation">
        <sequence resource="EMBL-CDS" id="AAF95652"/>
    </conflict>
</comment>
<dbReference type="EC" id="2.1.3.2" evidence="1"/>
<dbReference type="EMBL" id="AE003852">
    <property type="protein sequence ID" value="AAF95652.1"/>
    <property type="status" value="ALT_INIT"/>
    <property type="molecule type" value="Genomic_DNA"/>
</dbReference>
<dbReference type="PIR" id="H82066">
    <property type="entry name" value="H82066"/>
</dbReference>
<dbReference type="RefSeq" id="NP_232139.2">
    <property type="nucleotide sequence ID" value="NC_002505.1"/>
</dbReference>
<dbReference type="RefSeq" id="WP_000013853.1">
    <property type="nucleotide sequence ID" value="NZ_LT906614.1"/>
</dbReference>
<dbReference type="SMR" id="Q9KP66"/>
<dbReference type="STRING" id="243277.VC_2510"/>
<dbReference type="DNASU" id="2615174"/>
<dbReference type="EnsemblBacteria" id="AAF95652">
    <property type="protein sequence ID" value="AAF95652"/>
    <property type="gene ID" value="VC_2510"/>
</dbReference>
<dbReference type="GeneID" id="94012834"/>
<dbReference type="KEGG" id="vch:VC_2510"/>
<dbReference type="PATRIC" id="fig|243277.26.peg.2391"/>
<dbReference type="eggNOG" id="COG0540">
    <property type="taxonomic scope" value="Bacteria"/>
</dbReference>
<dbReference type="HOGENOM" id="CLU_043846_1_2_6"/>
<dbReference type="UniPathway" id="UPA00070">
    <property type="reaction ID" value="UER00116"/>
</dbReference>
<dbReference type="Proteomes" id="UP000000584">
    <property type="component" value="Chromosome 1"/>
</dbReference>
<dbReference type="GO" id="GO:0005737">
    <property type="term" value="C:cytoplasm"/>
    <property type="evidence" value="ECO:0000318"/>
    <property type="project" value="GO_Central"/>
</dbReference>
<dbReference type="GO" id="GO:0016597">
    <property type="term" value="F:amino acid binding"/>
    <property type="evidence" value="ECO:0007669"/>
    <property type="project" value="InterPro"/>
</dbReference>
<dbReference type="GO" id="GO:0004070">
    <property type="term" value="F:aspartate carbamoyltransferase activity"/>
    <property type="evidence" value="ECO:0007669"/>
    <property type="project" value="UniProtKB-UniRule"/>
</dbReference>
<dbReference type="GO" id="GO:0006207">
    <property type="term" value="P:'de novo' pyrimidine nucleobase biosynthetic process"/>
    <property type="evidence" value="ECO:0007669"/>
    <property type="project" value="InterPro"/>
</dbReference>
<dbReference type="GO" id="GO:0044205">
    <property type="term" value="P:'de novo' UMP biosynthetic process"/>
    <property type="evidence" value="ECO:0007669"/>
    <property type="project" value="UniProtKB-UniRule"/>
</dbReference>
<dbReference type="GO" id="GO:0006541">
    <property type="term" value="P:glutamine metabolic process"/>
    <property type="evidence" value="ECO:0000318"/>
    <property type="project" value="GO_Central"/>
</dbReference>
<dbReference type="FunFam" id="3.40.50.1370:FF:000001">
    <property type="entry name" value="Aspartate carbamoyltransferase"/>
    <property type="match status" value="1"/>
</dbReference>
<dbReference type="FunFam" id="3.40.50.1370:FF:000002">
    <property type="entry name" value="Aspartate carbamoyltransferase 2"/>
    <property type="match status" value="1"/>
</dbReference>
<dbReference type="Gene3D" id="3.40.50.1370">
    <property type="entry name" value="Aspartate/ornithine carbamoyltransferase"/>
    <property type="match status" value="2"/>
</dbReference>
<dbReference type="HAMAP" id="MF_00001">
    <property type="entry name" value="Asp_carb_tr"/>
    <property type="match status" value="1"/>
</dbReference>
<dbReference type="InterPro" id="IPR006132">
    <property type="entry name" value="Asp/Orn_carbamoyltranf_P-bd"/>
</dbReference>
<dbReference type="InterPro" id="IPR006130">
    <property type="entry name" value="Asp/Orn_carbamoylTrfase"/>
</dbReference>
<dbReference type="InterPro" id="IPR036901">
    <property type="entry name" value="Asp/Orn_carbamoylTrfase_sf"/>
</dbReference>
<dbReference type="InterPro" id="IPR002082">
    <property type="entry name" value="Asp_carbamoyltransf"/>
</dbReference>
<dbReference type="InterPro" id="IPR006131">
    <property type="entry name" value="Asp_carbamoyltransf_Asp/Orn-bd"/>
</dbReference>
<dbReference type="NCBIfam" id="TIGR00670">
    <property type="entry name" value="asp_carb_tr"/>
    <property type="match status" value="1"/>
</dbReference>
<dbReference type="NCBIfam" id="NF002032">
    <property type="entry name" value="PRK00856.1"/>
    <property type="match status" value="1"/>
</dbReference>
<dbReference type="PANTHER" id="PTHR45753:SF6">
    <property type="entry name" value="ASPARTATE CARBAMOYLTRANSFERASE"/>
    <property type="match status" value="1"/>
</dbReference>
<dbReference type="PANTHER" id="PTHR45753">
    <property type="entry name" value="ORNITHINE CARBAMOYLTRANSFERASE, MITOCHONDRIAL"/>
    <property type="match status" value="1"/>
</dbReference>
<dbReference type="Pfam" id="PF00185">
    <property type="entry name" value="OTCace"/>
    <property type="match status" value="1"/>
</dbReference>
<dbReference type="Pfam" id="PF02729">
    <property type="entry name" value="OTCace_N"/>
    <property type="match status" value="1"/>
</dbReference>
<dbReference type="PRINTS" id="PR00100">
    <property type="entry name" value="AOTCASE"/>
</dbReference>
<dbReference type="PRINTS" id="PR00101">
    <property type="entry name" value="ATCASE"/>
</dbReference>
<dbReference type="SUPFAM" id="SSF53671">
    <property type="entry name" value="Aspartate/ornithine carbamoyltransferase"/>
    <property type="match status" value="1"/>
</dbReference>
<dbReference type="PROSITE" id="PS00097">
    <property type="entry name" value="CARBAMOYLTRANSFERASE"/>
    <property type="match status" value="1"/>
</dbReference>
<name>PYRB_VIBCH</name>
<sequence>MANSLYQKHIISIAELSRAELELIVKTAGQLKAQPNPELIKHKVVASCFFEPSTRTRLSFETAIQRIGGSVIGFDNGGNTSLAKKGETLADSVRVISSYVDAFVMRHPQEGAARLASEFSNGVPVINAGDGSNQHPSQTLLDLYSIFETQGRLDNLDVAFVGDLKYGRTVHSLAQALAKFDNNRFYFVAPEALAMPDYICEELDEAGVKYQVFSDMESVIPELDILYMTRVQKERFDESEYAHIKSAYILTAAHLSDARSNLKVLHPLPRVDEITTDVDKTPHAYYFEQVENGVYAREALLALVLNESL</sequence>
<protein>
    <recommendedName>
        <fullName evidence="1">Aspartate carbamoyltransferase catalytic subunit</fullName>
        <ecNumber evidence="1">2.1.3.2</ecNumber>
    </recommendedName>
    <alternativeName>
        <fullName evidence="1">Aspartate transcarbamylase</fullName>
        <shortName evidence="1">ATCase</shortName>
    </alternativeName>
</protein>
<evidence type="ECO:0000255" key="1">
    <source>
        <dbReference type="HAMAP-Rule" id="MF_00001"/>
    </source>
</evidence>
<evidence type="ECO:0000305" key="2"/>